<proteinExistence type="inferred from homology"/>
<comment type="function">
    <text evidence="1">One of the primary rRNA binding proteins, it binds directly to 16S rRNA where it nucleates assembly of the head domain of the 30S subunit. Is located at the subunit interface close to the decoding center, probably blocks exit of the E-site tRNA (By similarity).</text>
</comment>
<comment type="subunit">
    <text evidence="1">Part of the 30S ribosomal subunit. Contacts proteins S9 and S11 (By similarity).</text>
</comment>
<comment type="similarity">
    <text evidence="2">Belongs to the universal ribosomal protein uS7 family.</text>
</comment>
<dbReference type="EMBL" id="L08171">
    <property type="protein sequence ID" value="AAA25376.1"/>
    <property type="molecule type" value="Genomic_DNA"/>
</dbReference>
<dbReference type="PIR" id="S35538">
    <property type="entry name" value="S35538"/>
</dbReference>
<dbReference type="GO" id="GO:1990904">
    <property type="term" value="C:ribonucleoprotein complex"/>
    <property type="evidence" value="ECO:0007669"/>
    <property type="project" value="UniProtKB-KW"/>
</dbReference>
<dbReference type="GO" id="GO:0005840">
    <property type="term" value="C:ribosome"/>
    <property type="evidence" value="ECO:0007669"/>
    <property type="project" value="UniProtKB-KW"/>
</dbReference>
<dbReference type="GO" id="GO:0019843">
    <property type="term" value="F:rRNA binding"/>
    <property type="evidence" value="ECO:0007669"/>
    <property type="project" value="UniProtKB-KW"/>
</dbReference>
<dbReference type="GO" id="GO:0000049">
    <property type="term" value="F:tRNA binding"/>
    <property type="evidence" value="ECO:0007669"/>
    <property type="project" value="UniProtKB-KW"/>
</dbReference>
<evidence type="ECO:0000250" key="1"/>
<evidence type="ECO:0000305" key="2"/>
<name>RS7_MYCIT</name>
<keyword id="KW-0687">Ribonucleoprotein</keyword>
<keyword id="KW-0689">Ribosomal protein</keyword>
<keyword id="KW-0694">RNA-binding</keyword>
<keyword id="KW-0699">rRNA-binding</keyword>
<keyword id="KW-0820">tRNA-binding</keyword>
<protein>
    <recommendedName>
        <fullName evidence="2">Small ribosomal subunit protein uS7</fullName>
    </recommendedName>
    <alternativeName>
        <fullName>30S ribosomal protein S7</fullName>
    </alternativeName>
</protein>
<organism>
    <name type="scientific">Mycobacterium intracellulare</name>
    <dbReference type="NCBI Taxonomy" id="1767"/>
    <lineage>
        <taxon>Bacteria</taxon>
        <taxon>Bacillati</taxon>
        <taxon>Actinomycetota</taxon>
        <taxon>Actinomycetes</taxon>
        <taxon>Mycobacteriales</taxon>
        <taxon>Mycobacteriaceae</taxon>
        <taxon>Mycobacterium</taxon>
        <taxon>Mycobacterium avium complex (MAC)</taxon>
    </lineage>
</organism>
<sequence>MPRKGPAPK</sequence>
<gene>
    <name type="primary">rpsG</name>
</gene>
<accession>P33564</accession>
<reference key="1">
    <citation type="journal article" date="1993" name="Nucleic Acids Res.">
        <title>Nucleotide sequence analysis of the ribosomal S12 gene of Mycobacterium intracellulare.</title>
        <authorList>
            <person name="Nair J."/>
            <person name="Rouse D.A."/>
            <person name="Morris S.L."/>
        </authorList>
    </citation>
    <scope>NUCLEOTIDE SEQUENCE [GENOMIC DNA]</scope>
</reference>
<feature type="initiator methionine" description="Removed" evidence="1">
    <location>
        <position position="1"/>
    </location>
</feature>
<feature type="chain" id="PRO_0000124297" description="Small ribosomal subunit protein uS7">
    <location>
        <begin position="2"/>
        <end position="9" status="greater than"/>
    </location>
</feature>
<feature type="non-terminal residue">
    <location>
        <position position="9"/>
    </location>
</feature>